<comment type="function">
    <text evidence="3 4 5">Required for the development of heart and visceral muscle; for the formation of somatic muscles. Has a crucial function in the early mesodermal subdivisions.</text>
</comment>
<comment type="subcellular location">
    <subcellularLocation>
        <location evidence="6">Nucleus</location>
    </subcellularLocation>
</comment>
<comment type="developmental stage">
    <text evidence="3">Is initially expressed throughout the presumptive mesoderm and becomes restricted to cardiac and visceral muscle.</text>
</comment>
<comment type="disruption phenotype">
    <text evidence="5">Absence of cardiac and midgut visceral muscle, and defects in a subset of dorsal body wall muscles.</text>
</comment>
<proteinExistence type="evidence at transcript level"/>
<gene>
    <name type="primary">tin</name>
    <name type="synonym">msh2</name>
    <name type="ORF">CG7895</name>
</gene>
<evidence type="ECO:0000255" key="1">
    <source>
        <dbReference type="PROSITE-ProRule" id="PRU00108"/>
    </source>
</evidence>
<evidence type="ECO:0000256" key="2">
    <source>
        <dbReference type="SAM" id="MobiDB-lite"/>
    </source>
</evidence>
<evidence type="ECO:0000269" key="3">
    <source>
    </source>
</evidence>
<evidence type="ECO:0000269" key="4">
    <source>
    </source>
</evidence>
<evidence type="ECO:0000269" key="5">
    <source>
    </source>
</evidence>
<evidence type="ECO:0000305" key="6"/>
<protein>
    <recommendedName>
        <fullName>Muscle-specific homeobox protein tinman</fullName>
    </recommendedName>
    <alternativeName>
        <fullName>Msh-2</fullName>
    </alternativeName>
    <alternativeName>
        <fullName>NK-4</fullName>
    </alternativeName>
</protein>
<name>TIN_DROME</name>
<keyword id="KW-0217">Developmental protein</keyword>
<keyword id="KW-0238">DNA-binding</keyword>
<keyword id="KW-0371">Homeobox</keyword>
<keyword id="KW-0539">Nucleus</keyword>
<keyword id="KW-1185">Reference proteome</keyword>
<reference key="1">
    <citation type="journal article" date="1990" name="Development">
        <title>A new homeobox-containing gene, msh-2, is transiently expressed early during mesoderm formation of Drosophila.</title>
        <authorList>
            <person name="Bodmer R."/>
            <person name="Jan L.Y."/>
            <person name="Jan Y.N."/>
        </authorList>
    </citation>
    <scope>NUCLEOTIDE SEQUENCE [MRNA]</scope>
    <scope>FUNCTION</scope>
    <scope>DEVELOPMENTAL STAGE</scope>
</reference>
<reference key="2">
    <citation type="journal article" date="2000" name="Science">
        <title>The genome sequence of Drosophila melanogaster.</title>
        <authorList>
            <person name="Adams M.D."/>
            <person name="Celniker S.E."/>
            <person name="Holt R.A."/>
            <person name="Evans C.A."/>
            <person name="Gocayne J.D."/>
            <person name="Amanatides P.G."/>
            <person name="Scherer S.E."/>
            <person name="Li P.W."/>
            <person name="Hoskins R.A."/>
            <person name="Galle R.F."/>
            <person name="George R.A."/>
            <person name="Lewis S.E."/>
            <person name="Richards S."/>
            <person name="Ashburner M."/>
            <person name="Henderson S.N."/>
            <person name="Sutton G.G."/>
            <person name="Wortman J.R."/>
            <person name="Yandell M.D."/>
            <person name="Zhang Q."/>
            <person name="Chen L.X."/>
            <person name="Brandon R.C."/>
            <person name="Rogers Y.-H.C."/>
            <person name="Blazej R.G."/>
            <person name="Champe M."/>
            <person name="Pfeiffer B.D."/>
            <person name="Wan K.H."/>
            <person name="Doyle C."/>
            <person name="Baxter E.G."/>
            <person name="Helt G."/>
            <person name="Nelson C.R."/>
            <person name="Miklos G.L.G."/>
            <person name="Abril J.F."/>
            <person name="Agbayani A."/>
            <person name="An H.-J."/>
            <person name="Andrews-Pfannkoch C."/>
            <person name="Baldwin D."/>
            <person name="Ballew R.M."/>
            <person name="Basu A."/>
            <person name="Baxendale J."/>
            <person name="Bayraktaroglu L."/>
            <person name="Beasley E.M."/>
            <person name="Beeson K.Y."/>
            <person name="Benos P.V."/>
            <person name="Berman B.P."/>
            <person name="Bhandari D."/>
            <person name="Bolshakov S."/>
            <person name="Borkova D."/>
            <person name="Botchan M.R."/>
            <person name="Bouck J."/>
            <person name="Brokstein P."/>
            <person name="Brottier P."/>
            <person name="Burtis K.C."/>
            <person name="Busam D.A."/>
            <person name="Butler H."/>
            <person name="Cadieu E."/>
            <person name="Center A."/>
            <person name="Chandra I."/>
            <person name="Cherry J.M."/>
            <person name="Cawley S."/>
            <person name="Dahlke C."/>
            <person name="Davenport L.B."/>
            <person name="Davies P."/>
            <person name="de Pablos B."/>
            <person name="Delcher A."/>
            <person name="Deng Z."/>
            <person name="Mays A.D."/>
            <person name="Dew I."/>
            <person name="Dietz S.M."/>
            <person name="Dodson K."/>
            <person name="Doup L.E."/>
            <person name="Downes M."/>
            <person name="Dugan-Rocha S."/>
            <person name="Dunkov B.C."/>
            <person name="Dunn P."/>
            <person name="Durbin K.J."/>
            <person name="Evangelista C.C."/>
            <person name="Ferraz C."/>
            <person name="Ferriera S."/>
            <person name="Fleischmann W."/>
            <person name="Fosler C."/>
            <person name="Gabrielian A.E."/>
            <person name="Garg N.S."/>
            <person name="Gelbart W.M."/>
            <person name="Glasser K."/>
            <person name="Glodek A."/>
            <person name="Gong F."/>
            <person name="Gorrell J.H."/>
            <person name="Gu Z."/>
            <person name="Guan P."/>
            <person name="Harris M."/>
            <person name="Harris N.L."/>
            <person name="Harvey D.A."/>
            <person name="Heiman T.J."/>
            <person name="Hernandez J.R."/>
            <person name="Houck J."/>
            <person name="Hostin D."/>
            <person name="Houston K.A."/>
            <person name="Howland T.J."/>
            <person name="Wei M.-H."/>
            <person name="Ibegwam C."/>
            <person name="Jalali M."/>
            <person name="Kalush F."/>
            <person name="Karpen G.H."/>
            <person name="Ke Z."/>
            <person name="Kennison J.A."/>
            <person name="Ketchum K.A."/>
            <person name="Kimmel B.E."/>
            <person name="Kodira C.D."/>
            <person name="Kraft C.L."/>
            <person name="Kravitz S."/>
            <person name="Kulp D."/>
            <person name="Lai Z."/>
            <person name="Lasko P."/>
            <person name="Lei Y."/>
            <person name="Levitsky A.A."/>
            <person name="Li J.H."/>
            <person name="Li Z."/>
            <person name="Liang Y."/>
            <person name="Lin X."/>
            <person name="Liu X."/>
            <person name="Mattei B."/>
            <person name="McIntosh T.C."/>
            <person name="McLeod M.P."/>
            <person name="McPherson D."/>
            <person name="Merkulov G."/>
            <person name="Milshina N.V."/>
            <person name="Mobarry C."/>
            <person name="Morris J."/>
            <person name="Moshrefi A."/>
            <person name="Mount S.M."/>
            <person name="Moy M."/>
            <person name="Murphy B."/>
            <person name="Murphy L."/>
            <person name="Muzny D.M."/>
            <person name="Nelson D.L."/>
            <person name="Nelson D.R."/>
            <person name="Nelson K.A."/>
            <person name="Nixon K."/>
            <person name="Nusskern D.R."/>
            <person name="Pacleb J.M."/>
            <person name="Palazzolo M."/>
            <person name="Pittman G.S."/>
            <person name="Pan S."/>
            <person name="Pollard J."/>
            <person name="Puri V."/>
            <person name="Reese M.G."/>
            <person name="Reinert K."/>
            <person name="Remington K."/>
            <person name="Saunders R.D.C."/>
            <person name="Scheeler F."/>
            <person name="Shen H."/>
            <person name="Shue B.C."/>
            <person name="Siden-Kiamos I."/>
            <person name="Simpson M."/>
            <person name="Skupski M.P."/>
            <person name="Smith T.J."/>
            <person name="Spier E."/>
            <person name="Spradling A.C."/>
            <person name="Stapleton M."/>
            <person name="Strong R."/>
            <person name="Sun E."/>
            <person name="Svirskas R."/>
            <person name="Tector C."/>
            <person name="Turner R."/>
            <person name="Venter E."/>
            <person name="Wang A.H."/>
            <person name="Wang X."/>
            <person name="Wang Z.-Y."/>
            <person name="Wassarman D.A."/>
            <person name="Weinstock G.M."/>
            <person name="Weissenbach J."/>
            <person name="Williams S.M."/>
            <person name="Woodage T."/>
            <person name="Worley K.C."/>
            <person name="Wu D."/>
            <person name="Yang S."/>
            <person name="Yao Q.A."/>
            <person name="Ye J."/>
            <person name="Yeh R.-F."/>
            <person name="Zaveri J.S."/>
            <person name="Zhan M."/>
            <person name="Zhang G."/>
            <person name="Zhao Q."/>
            <person name="Zheng L."/>
            <person name="Zheng X.H."/>
            <person name="Zhong F.N."/>
            <person name="Zhong W."/>
            <person name="Zhou X."/>
            <person name="Zhu S.C."/>
            <person name="Zhu X."/>
            <person name="Smith H.O."/>
            <person name="Gibbs R.A."/>
            <person name="Myers E.W."/>
            <person name="Rubin G.M."/>
            <person name="Venter J.C."/>
        </authorList>
    </citation>
    <scope>NUCLEOTIDE SEQUENCE [LARGE SCALE GENOMIC DNA]</scope>
    <source>
        <strain>Berkeley</strain>
    </source>
</reference>
<reference key="3">
    <citation type="journal article" date="2002" name="Genome Biol.">
        <title>Annotation of the Drosophila melanogaster euchromatic genome: a systematic review.</title>
        <authorList>
            <person name="Misra S."/>
            <person name="Crosby M.A."/>
            <person name="Mungall C.J."/>
            <person name="Matthews B.B."/>
            <person name="Campbell K.S."/>
            <person name="Hradecky P."/>
            <person name="Huang Y."/>
            <person name="Kaminker J.S."/>
            <person name="Millburn G.H."/>
            <person name="Prochnik S.E."/>
            <person name="Smith C.D."/>
            <person name="Tupy J.L."/>
            <person name="Whitfield E.J."/>
            <person name="Bayraktaroglu L."/>
            <person name="Berman B.P."/>
            <person name="Bettencourt B.R."/>
            <person name="Celniker S.E."/>
            <person name="de Grey A.D.N.J."/>
            <person name="Drysdale R.A."/>
            <person name="Harris N.L."/>
            <person name="Richter J."/>
            <person name="Russo S."/>
            <person name="Schroeder A.J."/>
            <person name="Shu S.Q."/>
            <person name="Stapleton M."/>
            <person name="Yamada C."/>
            <person name="Ashburner M."/>
            <person name="Gelbart W.M."/>
            <person name="Rubin G.M."/>
            <person name="Lewis S.E."/>
        </authorList>
    </citation>
    <scope>GENOME REANNOTATION</scope>
    <source>
        <strain>Berkeley</strain>
    </source>
</reference>
<reference key="4">
    <citation type="submission" date="2004-08" db="EMBL/GenBank/DDBJ databases">
        <authorList>
            <person name="Stapleton M."/>
            <person name="Carlson J.W."/>
            <person name="Chavez C."/>
            <person name="Frise E."/>
            <person name="George R.A."/>
            <person name="Pacleb J.M."/>
            <person name="Park S."/>
            <person name="Wan K.H."/>
            <person name="Yu C."/>
            <person name="Rubin G.M."/>
            <person name="Celniker S.E."/>
        </authorList>
    </citation>
    <scope>NUCLEOTIDE SEQUENCE [LARGE SCALE MRNA]</scope>
    <source>
        <strain>Berkeley</strain>
        <tissue>Embryo</tissue>
    </source>
</reference>
<reference key="5">
    <citation type="journal article" date="2004" name="Genetics">
        <title>Nucleotide variation in the tinman and bagpipe homeobox genes of Drosophila melanogaster.</title>
        <authorList>
            <person name="Balakirev E.S."/>
            <person name="Ayala F.J."/>
        </authorList>
    </citation>
    <scope>NUCLEOTIDE SEQUENCE [GENOMIC DNA] OF 1-252</scope>
    <source>
        <strain>F-1461S</strain>
        <strain>F-274F</strain>
        <strain>F-357F</strain>
        <strain>F-517F</strain>
        <strain>F-517S</strain>
        <strain>F-531F</strain>
        <strain>F-611F</strain>
        <strain>F-775F</strain>
        <strain>F-96S</strain>
        <strain>S-114S</strain>
        <strain>S-1224F</strain>
        <strain>S-174F</strain>
        <strain>S-255S</strain>
        <strain>S-2588S</strain>
        <strain>S-26F</strain>
        <strain>S-377F</strain>
        <strain>S-438S</strain>
        <strain>S-483F</strain>
        <strain>S-501F</strain>
        <strain>S-501S</strain>
        <strain>S-510S</strain>
        <strain>S-521F</strain>
        <strain>S-521S</strain>
        <strain>S-549S</strain>
        <strain>S-565F</strain>
        <strain>S-581F</strain>
        <strain>S-5F</strain>
        <strain>S-968F</strain>
        <strain>US-255F</strain>
    </source>
</reference>
<reference key="6">
    <citation type="journal article" date="1989" name="Proc. Natl. Acad. Sci. U.S.A.">
        <title>Drosophila NK-homeobox genes.</title>
        <authorList>
            <person name="Kim Y."/>
            <person name="Nirenberg M."/>
        </authorList>
    </citation>
    <scope>NUCLEOTIDE SEQUENCE [GENOMIC DNA] OF 267-416</scope>
    <source>
        <strain>Canton-S</strain>
    </source>
</reference>
<reference key="7">
    <citation type="journal article" date="1993" name="Development">
        <title>The gene tinman is required for specification of the heart and visceral muscles in Drosophila.</title>
        <authorList>
            <person name="Bodmer R."/>
        </authorList>
    </citation>
    <scope>FUNCTION</scope>
    <scope>DISRUPTION PHENOTYPE</scope>
</reference>
<reference key="8">
    <citation type="journal article" date="2021" name="Dev. Biol.">
        <title>Akirin is critical for early tinman induction and subsequent formation of the heart in Drosophila melanogaster.</title>
        <authorList>
            <person name="Howard A.M."/>
            <person name="Milner H."/>
            <person name="Hupp M."/>
            <person name="Willett C."/>
            <person name="Palermino K."/>
            <person name="Nowak S.J."/>
        </authorList>
    </citation>
    <scope>FUNCTION</scope>
</reference>
<dbReference type="EMBL" id="X55192">
    <property type="protein sequence ID" value="CAA38978.1"/>
    <property type="molecule type" value="mRNA"/>
</dbReference>
<dbReference type="EMBL" id="AE014297">
    <property type="protein sequence ID" value="AAF55890.1"/>
    <property type="molecule type" value="Genomic_DNA"/>
</dbReference>
<dbReference type="EMBL" id="BT015242">
    <property type="protein sequence ID" value="AAT94471.1"/>
    <property type="molecule type" value="mRNA"/>
</dbReference>
<dbReference type="EMBL" id="AY368079">
    <property type="protein sequence ID" value="AAQ75389.1"/>
    <property type="molecule type" value="Genomic_DNA"/>
</dbReference>
<dbReference type="EMBL" id="AY368080">
    <property type="protein sequence ID" value="AAQ75390.1"/>
    <property type="molecule type" value="Genomic_DNA"/>
</dbReference>
<dbReference type="EMBL" id="AY368081">
    <property type="protein sequence ID" value="AAQ75391.1"/>
    <property type="molecule type" value="Genomic_DNA"/>
</dbReference>
<dbReference type="EMBL" id="AY368082">
    <property type="protein sequence ID" value="AAQ75392.1"/>
    <property type="molecule type" value="Genomic_DNA"/>
</dbReference>
<dbReference type="EMBL" id="AY368083">
    <property type="protein sequence ID" value="AAQ75393.1"/>
    <property type="molecule type" value="Genomic_DNA"/>
</dbReference>
<dbReference type="EMBL" id="AY368084">
    <property type="protein sequence ID" value="AAQ75394.1"/>
    <property type="molecule type" value="Genomic_DNA"/>
</dbReference>
<dbReference type="EMBL" id="AY368085">
    <property type="protein sequence ID" value="AAQ75395.1"/>
    <property type="molecule type" value="Genomic_DNA"/>
</dbReference>
<dbReference type="EMBL" id="AY368086">
    <property type="protein sequence ID" value="AAQ75396.1"/>
    <property type="molecule type" value="Genomic_DNA"/>
</dbReference>
<dbReference type="EMBL" id="AY368087">
    <property type="protein sequence ID" value="AAQ75397.1"/>
    <property type="molecule type" value="Genomic_DNA"/>
</dbReference>
<dbReference type="EMBL" id="AY368088">
    <property type="protein sequence ID" value="AAQ75398.1"/>
    <property type="molecule type" value="Genomic_DNA"/>
</dbReference>
<dbReference type="EMBL" id="AY368089">
    <property type="protein sequence ID" value="AAQ75399.1"/>
    <property type="molecule type" value="Genomic_DNA"/>
</dbReference>
<dbReference type="EMBL" id="AY368090">
    <property type="protein sequence ID" value="AAQ75400.1"/>
    <property type="molecule type" value="Genomic_DNA"/>
</dbReference>
<dbReference type="EMBL" id="AY368091">
    <property type="protein sequence ID" value="AAQ75401.1"/>
    <property type="molecule type" value="Genomic_DNA"/>
</dbReference>
<dbReference type="EMBL" id="AY368092">
    <property type="protein sequence ID" value="AAQ75402.1"/>
    <property type="molecule type" value="Genomic_DNA"/>
</dbReference>
<dbReference type="EMBL" id="AY368093">
    <property type="protein sequence ID" value="AAQ75403.1"/>
    <property type="molecule type" value="Genomic_DNA"/>
</dbReference>
<dbReference type="EMBL" id="AY368094">
    <property type="protein sequence ID" value="AAQ75404.1"/>
    <property type="molecule type" value="Genomic_DNA"/>
</dbReference>
<dbReference type="EMBL" id="AY368095">
    <property type="protein sequence ID" value="AAQ75405.1"/>
    <property type="molecule type" value="Genomic_DNA"/>
</dbReference>
<dbReference type="EMBL" id="AY368096">
    <property type="protein sequence ID" value="AAQ75406.1"/>
    <property type="molecule type" value="Genomic_DNA"/>
</dbReference>
<dbReference type="EMBL" id="AY368097">
    <property type="protein sequence ID" value="AAQ75407.1"/>
    <property type="molecule type" value="Genomic_DNA"/>
</dbReference>
<dbReference type="EMBL" id="AY368098">
    <property type="protein sequence ID" value="AAQ75408.1"/>
    <property type="molecule type" value="Genomic_DNA"/>
</dbReference>
<dbReference type="EMBL" id="AY368099">
    <property type="protein sequence ID" value="AAQ75409.1"/>
    <property type="molecule type" value="Genomic_DNA"/>
</dbReference>
<dbReference type="EMBL" id="AY368100">
    <property type="protein sequence ID" value="AAQ75410.1"/>
    <property type="molecule type" value="Genomic_DNA"/>
</dbReference>
<dbReference type="EMBL" id="AY368101">
    <property type="protein sequence ID" value="AAQ75411.1"/>
    <property type="molecule type" value="Genomic_DNA"/>
</dbReference>
<dbReference type="EMBL" id="AY368102">
    <property type="protein sequence ID" value="AAQ75412.1"/>
    <property type="molecule type" value="Genomic_DNA"/>
</dbReference>
<dbReference type="EMBL" id="AY368103">
    <property type="protein sequence ID" value="AAQ75413.1"/>
    <property type="molecule type" value="Genomic_DNA"/>
</dbReference>
<dbReference type="EMBL" id="AY368104">
    <property type="protein sequence ID" value="AAQ75414.1"/>
    <property type="molecule type" value="Genomic_DNA"/>
</dbReference>
<dbReference type="EMBL" id="AY368105">
    <property type="protein sequence ID" value="AAQ75415.1"/>
    <property type="molecule type" value="Genomic_DNA"/>
</dbReference>
<dbReference type="EMBL" id="AY368106">
    <property type="protein sequence ID" value="AAQ75416.1"/>
    <property type="molecule type" value="Genomic_DNA"/>
</dbReference>
<dbReference type="EMBL" id="AY368107">
    <property type="protein sequence ID" value="AAQ75417.1"/>
    <property type="molecule type" value="Genomic_DNA"/>
</dbReference>
<dbReference type="EMBL" id="M27292">
    <property type="protein sequence ID" value="AAA28619.1"/>
    <property type="molecule type" value="Genomic_DNA"/>
</dbReference>
<dbReference type="PIR" id="A43561">
    <property type="entry name" value="A43561"/>
</dbReference>
<dbReference type="RefSeq" id="NP_524433.1">
    <property type="nucleotide sequence ID" value="NM_079709.3"/>
</dbReference>
<dbReference type="SMR" id="P22711"/>
<dbReference type="BioGRID" id="67502">
    <property type="interactions" value="16"/>
</dbReference>
<dbReference type="FunCoup" id="P22711">
    <property type="interactions" value="96"/>
</dbReference>
<dbReference type="IntAct" id="P22711">
    <property type="interactions" value="8"/>
</dbReference>
<dbReference type="STRING" id="7227.FBpp0083485"/>
<dbReference type="GlyGen" id="P22711">
    <property type="glycosylation" value="2 sites"/>
</dbReference>
<dbReference type="PaxDb" id="7227-FBpp0083485"/>
<dbReference type="DNASU" id="42536"/>
<dbReference type="EnsemblMetazoa" id="FBtr0084086">
    <property type="protein sequence ID" value="FBpp0083485"/>
    <property type="gene ID" value="FBgn0004110"/>
</dbReference>
<dbReference type="GeneID" id="42536"/>
<dbReference type="KEGG" id="dme:Dmel_CG7895"/>
<dbReference type="UCSC" id="CG7895-RA">
    <property type="organism name" value="d. melanogaster"/>
</dbReference>
<dbReference type="AGR" id="FB:FBgn0004110"/>
<dbReference type="CTD" id="42536"/>
<dbReference type="FlyBase" id="FBgn0004110">
    <property type="gene designation" value="tin"/>
</dbReference>
<dbReference type="VEuPathDB" id="VectorBase:FBgn0004110"/>
<dbReference type="eggNOG" id="KOG0842">
    <property type="taxonomic scope" value="Eukaryota"/>
</dbReference>
<dbReference type="HOGENOM" id="CLU_662713_0_0_1"/>
<dbReference type="InParanoid" id="P22711"/>
<dbReference type="OMA" id="HGHHQLY"/>
<dbReference type="OrthoDB" id="6159439at2759"/>
<dbReference type="PhylomeDB" id="P22711"/>
<dbReference type="SignaLink" id="P22711"/>
<dbReference type="BioGRID-ORCS" id="42536">
    <property type="hits" value="0 hits in 1 CRISPR screen"/>
</dbReference>
<dbReference type="GenomeRNAi" id="42536"/>
<dbReference type="PRO" id="PR:P22711"/>
<dbReference type="Proteomes" id="UP000000803">
    <property type="component" value="Chromosome 3R"/>
</dbReference>
<dbReference type="Bgee" id="FBgn0004110">
    <property type="expression patterns" value="Expressed in myoblast and 17 other cell types or tissues"/>
</dbReference>
<dbReference type="ExpressionAtlas" id="P22711">
    <property type="expression patterns" value="baseline and differential"/>
</dbReference>
<dbReference type="GO" id="GO:0005634">
    <property type="term" value="C:nucleus"/>
    <property type="evidence" value="ECO:0000314"/>
    <property type="project" value="FlyBase"/>
</dbReference>
<dbReference type="GO" id="GO:0003677">
    <property type="term" value="F:DNA binding"/>
    <property type="evidence" value="ECO:0000314"/>
    <property type="project" value="FlyBase"/>
</dbReference>
<dbReference type="GO" id="GO:0000981">
    <property type="term" value="F:DNA-binding transcription factor activity, RNA polymerase II-specific"/>
    <property type="evidence" value="ECO:0000314"/>
    <property type="project" value="FlyBase"/>
</dbReference>
<dbReference type="GO" id="GO:0000978">
    <property type="term" value="F:RNA polymerase II cis-regulatory region sequence-specific DNA binding"/>
    <property type="evidence" value="ECO:0000314"/>
    <property type="project" value="FlyBase"/>
</dbReference>
<dbReference type="GO" id="GO:0055007">
    <property type="term" value="P:cardiac muscle cell differentiation"/>
    <property type="evidence" value="ECO:0000315"/>
    <property type="project" value="FlyBase"/>
</dbReference>
<dbReference type="GO" id="GO:0010002">
    <property type="term" value="P:cardioblast differentiation"/>
    <property type="evidence" value="ECO:0000315"/>
    <property type="project" value="FlyBase"/>
</dbReference>
<dbReference type="GO" id="GO:0035051">
    <property type="term" value="P:cardiocyte differentiation"/>
    <property type="evidence" value="ECO:0000315"/>
    <property type="project" value="FlyBase"/>
</dbReference>
<dbReference type="GO" id="GO:0030154">
    <property type="term" value="P:cell differentiation"/>
    <property type="evidence" value="ECO:0000318"/>
    <property type="project" value="GO_Central"/>
</dbReference>
<dbReference type="GO" id="GO:0071907">
    <property type="term" value="P:determination of digestive tract left/right asymmetry"/>
    <property type="evidence" value="ECO:0000315"/>
    <property type="project" value="FlyBase"/>
</dbReference>
<dbReference type="GO" id="GO:0048615">
    <property type="term" value="P:embryonic anterior midgut (ectodermal) morphogenesis"/>
    <property type="evidence" value="ECO:0000315"/>
    <property type="project" value="FlyBase"/>
</dbReference>
<dbReference type="GO" id="GO:0035050">
    <property type="term" value="P:embryonic heart tube development"/>
    <property type="evidence" value="ECO:0000315"/>
    <property type="project" value="FlyBase"/>
</dbReference>
<dbReference type="GO" id="GO:0008354">
    <property type="term" value="P:germ cell migration"/>
    <property type="evidence" value="ECO:0000315"/>
    <property type="project" value="FlyBase"/>
</dbReference>
<dbReference type="GO" id="GO:0008406">
    <property type="term" value="P:gonad development"/>
    <property type="evidence" value="ECO:0000304"/>
    <property type="project" value="FlyBase"/>
</dbReference>
<dbReference type="GO" id="GO:0007506">
    <property type="term" value="P:gonadal mesoderm development"/>
    <property type="evidence" value="ECO:0000315"/>
    <property type="project" value="FlyBase"/>
</dbReference>
<dbReference type="GO" id="GO:0048542">
    <property type="term" value="P:lymph gland development"/>
    <property type="evidence" value="ECO:0000315"/>
    <property type="project" value="FlyBase"/>
</dbReference>
<dbReference type="GO" id="GO:0007498">
    <property type="term" value="P:mesoderm development"/>
    <property type="evidence" value="ECO:0000270"/>
    <property type="project" value="FlyBase"/>
</dbReference>
<dbReference type="GO" id="GO:0007552">
    <property type="term" value="P:metamorphosis"/>
    <property type="evidence" value="ECO:0000304"/>
    <property type="project" value="FlyBase"/>
</dbReference>
<dbReference type="GO" id="GO:0045892">
    <property type="term" value="P:negative regulation of DNA-templated transcription"/>
    <property type="evidence" value="ECO:0000304"/>
    <property type="project" value="FlyBase"/>
</dbReference>
<dbReference type="GO" id="GO:0061101">
    <property type="term" value="P:neuroendocrine cell differentiation"/>
    <property type="evidence" value="ECO:0000315"/>
    <property type="project" value="FlyBase"/>
</dbReference>
<dbReference type="GO" id="GO:0061320">
    <property type="term" value="P:pericardial nephrocyte differentiation"/>
    <property type="evidence" value="ECO:0000315"/>
    <property type="project" value="FlyBase"/>
</dbReference>
<dbReference type="GO" id="GO:0045944">
    <property type="term" value="P:positive regulation of transcription by RNA polymerase II"/>
    <property type="evidence" value="ECO:0000314"/>
    <property type="project" value="FlyBase"/>
</dbReference>
<dbReference type="GO" id="GO:0006357">
    <property type="term" value="P:regulation of transcription by RNA polymerase II"/>
    <property type="evidence" value="ECO:0000318"/>
    <property type="project" value="GO_Central"/>
</dbReference>
<dbReference type="GO" id="GO:0007435">
    <property type="term" value="P:salivary gland morphogenesis"/>
    <property type="evidence" value="ECO:0000315"/>
    <property type="project" value="FlyBase"/>
</dbReference>
<dbReference type="GO" id="GO:0007419">
    <property type="term" value="P:ventral cord development"/>
    <property type="evidence" value="ECO:0007001"/>
    <property type="project" value="FlyBase"/>
</dbReference>
<dbReference type="CDD" id="cd00086">
    <property type="entry name" value="homeodomain"/>
    <property type="match status" value="1"/>
</dbReference>
<dbReference type="FunFam" id="1.10.10.60:FF:000532">
    <property type="entry name" value="C. Elegans Homeobox"/>
    <property type="match status" value="1"/>
</dbReference>
<dbReference type="Gene3D" id="1.10.10.60">
    <property type="entry name" value="Homeodomain-like"/>
    <property type="match status" value="1"/>
</dbReference>
<dbReference type="InterPro" id="IPR001356">
    <property type="entry name" value="HD"/>
</dbReference>
<dbReference type="InterPro" id="IPR017970">
    <property type="entry name" value="Homeobox_CS"/>
</dbReference>
<dbReference type="InterPro" id="IPR050394">
    <property type="entry name" value="Homeobox_NK-like"/>
</dbReference>
<dbReference type="InterPro" id="IPR009057">
    <property type="entry name" value="Homeodomain-like_sf"/>
</dbReference>
<dbReference type="PANTHER" id="PTHR24340">
    <property type="entry name" value="HOMEOBOX PROTEIN NKX"/>
    <property type="match status" value="1"/>
</dbReference>
<dbReference type="PANTHER" id="PTHR24340:SF41">
    <property type="entry name" value="MUSCLE-SPECIFIC HOMEOBOX PROTEIN TINMAN-RELATED"/>
    <property type="match status" value="1"/>
</dbReference>
<dbReference type="Pfam" id="PF00046">
    <property type="entry name" value="Homeodomain"/>
    <property type="match status" value="1"/>
</dbReference>
<dbReference type="SMART" id="SM00389">
    <property type="entry name" value="HOX"/>
    <property type="match status" value="1"/>
</dbReference>
<dbReference type="SUPFAM" id="SSF46689">
    <property type="entry name" value="Homeodomain-like"/>
    <property type="match status" value="1"/>
</dbReference>
<dbReference type="PROSITE" id="PS00027">
    <property type="entry name" value="HOMEOBOX_1"/>
    <property type="match status" value="1"/>
</dbReference>
<dbReference type="PROSITE" id="PS50071">
    <property type="entry name" value="HOMEOBOX_2"/>
    <property type="match status" value="1"/>
</dbReference>
<sequence length="416" mass="46066">MLQHHQQQAQSGGYYDHYTQSPSPGSLTNADALNTTPFSVKDILNMVNQTEAYEGSYGHIDGAATASALFAAGEYQNPHQYLNHQQHQQSELPIPQQQLHHQHLDDGATTSSSLSPLLPPPPHQLYGGYQDYGMPAHMFQHHHGHPHQSFQHSASAYNMSASQFYAGASATAYQTPATYNYNYAGSGEVYGGATPSAVGIKSEYIPTPYVTPSPTLDLNSSAEVDSLQAPTQKLCVNPLSQRLMETASNSSSLRSIYGSDEGAKKKDNSQVTSSRSELRKNSISGNSNPGSNSGSTKPRMKRKPRVLFSQAQVLELECRFRLKKYLTGAEREIIAQKLNLSATQVKIWFQNRRYKSKRGDIDCEGIAKHLKLKSEPLDSPTSLPPPIPNHVMWPPTMQQSQQQQQHHAQQQQMQHM</sequence>
<feature type="chain" id="PRO_0000049080" description="Muscle-specific homeobox protein tinman">
    <location>
        <begin position="1"/>
        <end position="416"/>
    </location>
</feature>
<feature type="DNA-binding region" description="Homeobox" evidence="1">
    <location>
        <begin position="301"/>
        <end position="360"/>
    </location>
</feature>
<feature type="region of interest" description="Disordered" evidence="2">
    <location>
        <begin position="1"/>
        <end position="33"/>
    </location>
</feature>
<feature type="region of interest" description="Disordered" evidence="2">
    <location>
        <begin position="246"/>
        <end position="305"/>
    </location>
</feature>
<feature type="region of interest" description="Disordered" evidence="2">
    <location>
        <begin position="391"/>
        <end position="416"/>
    </location>
</feature>
<feature type="compositionally biased region" description="Polar residues" evidence="2">
    <location>
        <begin position="1"/>
        <end position="11"/>
    </location>
</feature>
<feature type="compositionally biased region" description="Polar residues" evidence="2">
    <location>
        <begin position="18"/>
        <end position="33"/>
    </location>
</feature>
<feature type="compositionally biased region" description="Low complexity" evidence="2">
    <location>
        <begin position="281"/>
        <end position="295"/>
    </location>
</feature>
<feature type="compositionally biased region" description="Low complexity" evidence="2">
    <location>
        <begin position="397"/>
        <end position="416"/>
    </location>
</feature>
<feature type="sequence variant" description="In strain: S-521F.">
    <original>G</original>
    <variation>S</variation>
    <location>
        <position position="12"/>
    </location>
</feature>
<feature type="sequence variant" description="In strain: F-96S, F-775F, S-26F, S-438S, S-483F, S-510S, S-521S, S-549S, S-565F, S-968F and US-255F.">
    <original>A</original>
    <variation>G</variation>
    <location>
        <position position="71"/>
    </location>
</feature>
<feature type="sequence variant" description="In strain: S-5F.">
    <original>Y</original>
    <variation>N</variation>
    <location>
        <position position="173"/>
    </location>
</feature>
<feature type="sequence variant" description="In strain: S-255S.">
    <original>P</original>
    <variation>A</variation>
    <location>
        <position position="238"/>
    </location>
</feature>
<feature type="sequence conflict" description="In Ref. 1." evidence="6" ref="1">
    <original>G</original>
    <variation>D</variation>
    <location>
        <position position="199"/>
    </location>
</feature>
<feature type="sequence conflict" description="In Ref. 4." evidence="6" ref="4">
    <original>A</original>
    <variation>T</variation>
    <location>
        <position position="342"/>
    </location>
</feature>
<organism>
    <name type="scientific">Drosophila melanogaster</name>
    <name type="common">Fruit fly</name>
    <dbReference type="NCBI Taxonomy" id="7227"/>
    <lineage>
        <taxon>Eukaryota</taxon>
        <taxon>Metazoa</taxon>
        <taxon>Ecdysozoa</taxon>
        <taxon>Arthropoda</taxon>
        <taxon>Hexapoda</taxon>
        <taxon>Insecta</taxon>
        <taxon>Pterygota</taxon>
        <taxon>Neoptera</taxon>
        <taxon>Endopterygota</taxon>
        <taxon>Diptera</taxon>
        <taxon>Brachycera</taxon>
        <taxon>Muscomorpha</taxon>
        <taxon>Ephydroidea</taxon>
        <taxon>Drosophilidae</taxon>
        <taxon>Drosophila</taxon>
        <taxon>Sophophora</taxon>
    </lineage>
</organism>
<accession>P22711</accession>
<accession>Q6AWK6</accession>
<accession>Q6UKJ7</accession>
<accession>Q6UKK8</accession>
<accession>Q6UKL1</accession>
<accession>Q6UKL4</accession>
<accession>Q6UKL5</accession>
<accession>Q9TY85</accession>
<accession>Q9VDA7</accession>